<name>RASN_CAVPO</name>
<proteinExistence type="evidence at transcript level"/>
<comment type="function">
    <text evidence="2">Ras proteins bind GDP/GTP and possess intrinsic GTPase activity.</text>
</comment>
<comment type="catalytic activity">
    <reaction evidence="4">
        <text>GTP + H2O = GDP + phosphate + H(+)</text>
        <dbReference type="Rhea" id="RHEA:19669"/>
        <dbReference type="ChEBI" id="CHEBI:15377"/>
        <dbReference type="ChEBI" id="CHEBI:15378"/>
        <dbReference type="ChEBI" id="CHEBI:37565"/>
        <dbReference type="ChEBI" id="CHEBI:43474"/>
        <dbReference type="ChEBI" id="CHEBI:58189"/>
        <dbReference type="EC" id="3.6.5.2"/>
    </reaction>
</comment>
<comment type="activity regulation">
    <text>Alternates between an inactive form bound to GDP and an active form bound to GTP. Activated by a guanine nucleotide-exchange factor (GEF) and inactivated by a GTPase-activating protein (GAP).</text>
</comment>
<comment type="subunit">
    <text evidence="2 5">Interacts (active GTP-bound form preferentially) with RGS14 (By similarity). Interacts (active GTP-bound form) with RASSF7 (By similarity). Interacts (active GTP-bound form) with both SHOC2 and PP1c (all isoforms) to form a tertiary complex; SHOC2 and PP1c preferably bind M-Ras/MRAS, but they also bind K-Ras/KRAS, N-Ras/NRAS and H-Ras/HRAS (By similarity).</text>
</comment>
<comment type="subcellular location">
    <subcellularLocation>
        <location evidence="2">Cell membrane</location>
        <topology evidence="2">Lipid-anchor</topology>
        <orientation evidence="2">Cytoplasmic side</orientation>
    </subcellularLocation>
    <subcellularLocation>
        <location evidence="2">Golgi apparatus membrane</location>
        <topology evidence="2">Lipid-anchor</topology>
    </subcellularLocation>
    <text evidence="2">Shuttles between the plasma membrane and the Golgi apparatus.</text>
</comment>
<comment type="alternative products">
    <event type="alternative splicing"/>
    <isoform>
        <id>P12825-1</id>
        <name>1</name>
        <sequence type="displayed"/>
    </isoform>
    <isoform>
        <id>P12825-2</id>
        <name>2</name>
        <name>Truncated</name>
        <sequence type="described" ref="VSP_005535 VSP_005536"/>
    </isoform>
</comment>
<comment type="PTM">
    <text evidence="2">Palmitoylated by the ZDHHC9-GOLGA7 complex. Depalmitoylated by ABHD17A, ABHD17B and ABHD17C. A continuous cycle of de- and re-palmitoylation regulates rapid exchange between plasma membrane and Golgi.</text>
</comment>
<comment type="PTM">
    <text evidence="4">Acetylation at Lys-104 prevents interaction with guanine nucleotide exchange factors (GEFs).</text>
</comment>
<comment type="PTM">
    <text evidence="3">Ubiquitinated by the BCR(LZTR1) E3 ubiquitin ligase complex at Lys-170 in a non-degradative manner, leading to inhibit Ras signaling by decreasing Ras association with membranes.</text>
</comment>
<comment type="PTM">
    <text evidence="2">Phosphorylation at Ser-89 enhances NRAS association with its downstream effectors.</text>
</comment>
<comment type="similarity">
    <text evidence="7">Belongs to the small GTPase superfamily. Ras family.</text>
</comment>
<dbReference type="EC" id="3.6.5.2" evidence="4"/>
<dbReference type="EMBL" id="X60128">
    <property type="protein sequence ID" value="CAA42716.1"/>
    <property type="molecule type" value="mRNA"/>
</dbReference>
<dbReference type="EMBL" id="M15808">
    <property type="protein sequence ID" value="AAA37050.1"/>
    <property type="molecule type" value="Genomic_DNA"/>
</dbReference>
<dbReference type="EMBL" id="X60151">
    <property type="protein sequence ID" value="CAA42724.1"/>
    <property type="molecule type" value="Genomic_DNA"/>
</dbReference>
<dbReference type="PIR" id="A23652">
    <property type="entry name" value="TVGPRT"/>
</dbReference>
<dbReference type="PIR" id="A26552">
    <property type="entry name" value="TVGPRS"/>
</dbReference>
<dbReference type="RefSeq" id="NP_001166369.1">
    <molecule id="P12825-1"/>
    <property type="nucleotide sequence ID" value="NM_001172898.1"/>
</dbReference>
<dbReference type="RefSeq" id="XP_005007810.1">
    <molecule id="P12825-1"/>
    <property type="nucleotide sequence ID" value="XM_005007753.2"/>
</dbReference>
<dbReference type="SMR" id="P12825"/>
<dbReference type="FunCoup" id="P12825">
    <property type="interactions" value="2405"/>
</dbReference>
<dbReference type="STRING" id="10141.ENSCPOP00000009613"/>
<dbReference type="Ensembl" id="ENSCPOT00000010808.3">
    <molecule id="P12825-1"/>
    <property type="protein sequence ID" value="ENSCPOP00000009613.3"/>
    <property type="gene ID" value="ENSCPOG00000021833.2"/>
</dbReference>
<dbReference type="Ensembl" id="ENSCPOT00000021061.2">
    <molecule id="P12825-1"/>
    <property type="protein sequence ID" value="ENSCPOP00000016765.1"/>
    <property type="gene ID" value="ENSCPOG00000021833.2"/>
</dbReference>
<dbReference type="GeneID" id="100135584"/>
<dbReference type="KEGG" id="cpoc:100135584"/>
<dbReference type="CTD" id="4893"/>
<dbReference type="VEuPathDB" id="HostDB:ENSCPOG00000021833"/>
<dbReference type="eggNOG" id="KOG0395">
    <property type="taxonomic scope" value="Eukaryota"/>
</dbReference>
<dbReference type="GeneTree" id="ENSGT00940000158947"/>
<dbReference type="HOGENOM" id="CLU_041217_9_8_1"/>
<dbReference type="InParanoid" id="P12825"/>
<dbReference type="OMA" id="RAVDIWG"/>
<dbReference type="OrthoDB" id="5976022at2759"/>
<dbReference type="TreeFam" id="TF312796"/>
<dbReference type="Proteomes" id="UP000005447">
    <property type="component" value="Unassembled WGS sequence"/>
</dbReference>
<dbReference type="Bgee" id="ENSCPOG00000021833">
    <property type="expression patterns" value="Expressed in testis and 12 other cell types or tissues"/>
</dbReference>
<dbReference type="GO" id="GO:0000139">
    <property type="term" value="C:Golgi membrane"/>
    <property type="evidence" value="ECO:0007669"/>
    <property type="project" value="UniProtKB-SubCell"/>
</dbReference>
<dbReference type="GO" id="GO:0005886">
    <property type="term" value="C:plasma membrane"/>
    <property type="evidence" value="ECO:0007669"/>
    <property type="project" value="UniProtKB-SubCell"/>
</dbReference>
<dbReference type="GO" id="GO:0003925">
    <property type="term" value="F:G protein activity"/>
    <property type="evidence" value="ECO:0007669"/>
    <property type="project" value="UniProtKB-EC"/>
</dbReference>
<dbReference type="GO" id="GO:0005525">
    <property type="term" value="F:GTP binding"/>
    <property type="evidence" value="ECO:0007669"/>
    <property type="project" value="UniProtKB-KW"/>
</dbReference>
<dbReference type="GO" id="GO:0003924">
    <property type="term" value="F:GTPase activity"/>
    <property type="evidence" value="ECO:0000250"/>
    <property type="project" value="UniProtKB"/>
</dbReference>
<dbReference type="GO" id="GO:0044877">
    <property type="term" value="F:protein-containing complex binding"/>
    <property type="evidence" value="ECO:0007669"/>
    <property type="project" value="Ensembl"/>
</dbReference>
<dbReference type="GO" id="GO:0001938">
    <property type="term" value="P:positive regulation of endothelial cell proliferation"/>
    <property type="evidence" value="ECO:0007669"/>
    <property type="project" value="Ensembl"/>
</dbReference>
<dbReference type="GO" id="GO:0007265">
    <property type="term" value="P:Ras protein signal transduction"/>
    <property type="evidence" value="ECO:0000250"/>
    <property type="project" value="UniProtKB"/>
</dbReference>
<dbReference type="CDD" id="cd04138">
    <property type="entry name" value="H_N_K_Ras_like"/>
    <property type="match status" value="1"/>
</dbReference>
<dbReference type="FunFam" id="3.40.50.300:FF:000096">
    <property type="entry name" value="KRAS proto-oncogene, GTPase"/>
    <property type="match status" value="1"/>
</dbReference>
<dbReference type="Gene3D" id="3.40.50.300">
    <property type="entry name" value="P-loop containing nucleotide triphosphate hydrolases"/>
    <property type="match status" value="1"/>
</dbReference>
<dbReference type="InterPro" id="IPR027417">
    <property type="entry name" value="P-loop_NTPase"/>
</dbReference>
<dbReference type="InterPro" id="IPR005225">
    <property type="entry name" value="Small_GTP-bd"/>
</dbReference>
<dbReference type="InterPro" id="IPR001806">
    <property type="entry name" value="Small_GTPase"/>
</dbReference>
<dbReference type="InterPro" id="IPR020849">
    <property type="entry name" value="Small_GTPase_Ras-type"/>
</dbReference>
<dbReference type="NCBIfam" id="TIGR00231">
    <property type="entry name" value="small_GTP"/>
    <property type="match status" value="1"/>
</dbReference>
<dbReference type="PANTHER" id="PTHR24070">
    <property type="entry name" value="RAS, DI-RAS, AND RHEB FAMILY MEMBERS OF SMALL GTPASE SUPERFAMILY"/>
    <property type="match status" value="1"/>
</dbReference>
<dbReference type="Pfam" id="PF00071">
    <property type="entry name" value="Ras"/>
    <property type="match status" value="1"/>
</dbReference>
<dbReference type="PRINTS" id="PR00449">
    <property type="entry name" value="RASTRNSFRMNG"/>
</dbReference>
<dbReference type="SMART" id="SM00175">
    <property type="entry name" value="RAB"/>
    <property type="match status" value="1"/>
</dbReference>
<dbReference type="SMART" id="SM00173">
    <property type="entry name" value="RAS"/>
    <property type="match status" value="1"/>
</dbReference>
<dbReference type="SMART" id="SM00174">
    <property type="entry name" value="RHO"/>
    <property type="match status" value="1"/>
</dbReference>
<dbReference type="SUPFAM" id="SSF52540">
    <property type="entry name" value="P-loop containing nucleoside triphosphate hydrolases"/>
    <property type="match status" value="1"/>
</dbReference>
<dbReference type="PROSITE" id="PS51421">
    <property type="entry name" value="RAS"/>
    <property type="match status" value="1"/>
</dbReference>
<reference key="1">
    <citation type="journal article" date="1987" name="J. Biol. Chem.">
        <title>Carcinogens with diverse mutagenic activities initiate neoplastic guinea pig cells that acquire the same N-ras point mutation.</title>
        <authorList>
            <person name="Doniger J."/>
            <person name="Notario V."/>
            <person name="Dipaolo J.A."/>
        </authorList>
    </citation>
    <scope>NUCLEOTIDE SEQUENCE [GENOMIC DNA]</scope>
</reference>
<reference key="2">
    <citation type="journal article" date="1988" name="Oncogene">
        <title>Alternative splicing results in a truncated N-ras protein.</title>
        <authorList>
            <person name="Doniger J."/>
        </authorList>
    </citation>
    <scope>NUCLEOTIDE SEQUENCE (ISOFORM 2)</scope>
</reference>
<reference key="3">
    <citation type="journal article" date="1987" name="Oncogene">
        <title>Differential conservation of non-coding regions within human and guinea pig N-ras genes.</title>
        <authorList>
            <person name="Doniger J."/>
        </authorList>
    </citation>
    <scope>NUCLEOTIDE SEQUENCE</scope>
    <source>
        <strain>2</strain>
        <tissue>Fetal fibroblast</tissue>
    </source>
</reference>
<sequence>MTEYKLVVVGAGGVGKSALTIQLIQNHFVDEYDPTIEDSYRKQVVIDGETCLLDILDTAGQEEYSAMRDQYMRTGEGFLCVFAINNSKSFADINLYREQIKRVKDSDDVPMVLVGNKCDLPTRTVDTKQAHELAKSYGIPFIETSAKTRQGVEDAFYTLVREIRQYRMKKLNSNDDGTQGCMGLPCVVM</sequence>
<keyword id="KW-0007">Acetylation</keyword>
<keyword id="KW-0025">Alternative splicing</keyword>
<keyword id="KW-1003">Cell membrane</keyword>
<keyword id="KW-0333">Golgi apparatus</keyword>
<keyword id="KW-0342">GTP-binding</keyword>
<keyword id="KW-0378">Hydrolase</keyword>
<keyword id="KW-1017">Isopeptide bond</keyword>
<keyword id="KW-0449">Lipoprotein</keyword>
<keyword id="KW-0472">Membrane</keyword>
<keyword id="KW-0488">Methylation</keyword>
<keyword id="KW-0547">Nucleotide-binding</keyword>
<keyword id="KW-0564">Palmitate</keyword>
<keyword id="KW-0597">Phosphoprotein</keyword>
<keyword id="KW-0636">Prenylation</keyword>
<keyword id="KW-0656">Proto-oncogene</keyword>
<keyword id="KW-1185">Reference proteome</keyword>
<keyword id="KW-0832">Ubl conjugation</keyword>
<feature type="chain" id="PRO_0000043004" description="GTPase NRas">
    <location>
        <begin position="1"/>
        <end position="186"/>
    </location>
</feature>
<feature type="propeptide" id="PRO_0000043005" description="Removed in mature form" evidence="1">
    <location>
        <begin position="187"/>
        <end position="189"/>
    </location>
</feature>
<feature type="region of interest" description="Hypervariable region">
    <location>
        <begin position="166"/>
        <end position="185"/>
    </location>
</feature>
<feature type="short sequence motif" description="Effector region">
    <location>
        <begin position="32"/>
        <end position="40"/>
    </location>
</feature>
<feature type="binding site" evidence="2">
    <location>
        <begin position="10"/>
        <end position="18"/>
    </location>
    <ligand>
        <name>GTP</name>
        <dbReference type="ChEBI" id="CHEBI:37565"/>
    </ligand>
</feature>
<feature type="binding site" evidence="2">
    <location>
        <begin position="29"/>
        <end position="30"/>
    </location>
    <ligand>
        <name>GTP</name>
        <dbReference type="ChEBI" id="CHEBI:37565"/>
    </ligand>
</feature>
<feature type="binding site" evidence="6">
    <location>
        <begin position="57"/>
        <end position="61"/>
    </location>
    <ligand>
        <name>GTP</name>
        <dbReference type="ChEBI" id="CHEBI:37565"/>
    </ligand>
</feature>
<feature type="binding site" evidence="2">
    <location>
        <begin position="116"/>
        <end position="119"/>
    </location>
    <ligand>
        <name>GTP</name>
        <dbReference type="ChEBI" id="CHEBI:37565"/>
    </ligand>
</feature>
<feature type="modified residue" description="Phosphoserine" evidence="2">
    <location>
        <position position="89"/>
    </location>
</feature>
<feature type="lipid moiety-binding region" description="S-palmitoyl cysteine" evidence="2">
    <location>
        <position position="181"/>
    </location>
</feature>
<feature type="lipid moiety-binding region" description="S-farnesyl cysteine" evidence="2">
    <location>
        <position position="186"/>
    </location>
</feature>
<feature type="cross-link" description="Glycyl lysine isopeptide (Lys-Gly) (interchain with G-Cter in ubiquitin)" evidence="2">
    <location>
        <position position="170"/>
    </location>
</feature>
<feature type="splice variant" id="VSP_005535" description="In isoform 2." evidence="7">
    <original>EQIKRVKDS</original>
    <variation>VLKMHFTHS</variation>
    <location>
        <begin position="98"/>
        <end position="106"/>
    </location>
</feature>
<feature type="splice variant" id="VSP_005536" description="In isoform 2." evidence="7">
    <location>
        <begin position="107"/>
        <end position="189"/>
    </location>
</feature>
<accession>P12825</accession>
<protein>
    <recommendedName>
        <fullName>GTPase NRas</fullName>
        <ecNumber evidence="4">3.6.5.2</ecNumber>
    </recommendedName>
    <alternativeName>
        <fullName>Transforming protein N-Ras</fullName>
    </alternativeName>
</protein>
<gene>
    <name type="primary">NRAS</name>
</gene>
<evidence type="ECO:0000250" key="1"/>
<evidence type="ECO:0000250" key="2">
    <source>
        <dbReference type="UniProtKB" id="P01111"/>
    </source>
</evidence>
<evidence type="ECO:0000250" key="3">
    <source>
        <dbReference type="UniProtKB" id="P01112"/>
    </source>
</evidence>
<evidence type="ECO:0000250" key="4">
    <source>
        <dbReference type="UniProtKB" id="P01116"/>
    </source>
</evidence>
<evidence type="ECO:0000250" key="5">
    <source>
        <dbReference type="UniProtKB" id="Q04970"/>
    </source>
</evidence>
<evidence type="ECO:0000255" key="6"/>
<evidence type="ECO:0000305" key="7"/>
<organism>
    <name type="scientific">Cavia porcellus</name>
    <name type="common">Guinea pig</name>
    <dbReference type="NCBI Taxonomy" id="10141"/>
    <lineage>
        <taxon>Eukaryota</taxon>
        <taxon>Metazoa</taxon>
        <taxon>Chordata</taxon>
        <taxon>Craniata</taxon>
        <taxon>Vertebrata</taxon>
        <taxon>Euteleostomi</taxon>
        <taxon>Mammalia</taxon>
        <taxon>Eutheria</taxon>
        <taxon>Euarchontoglires</taxon>
        <taxon>Glires</taxon>
        <taxon>Rodentia</taxon>
        <taxon>Hystricomorpha</taxon>
        <taxon>Caviidae</taxon>
        <taxon>Cavia</taxon>
    </lineage>
</organism>